<evidence type="ECO:0000250" key="1"/>
<evidence type="ECO:0000255" key="2">
    <source>
        <dbReference type="PROSITE-ProRule" id="PRU00594"/>
    </source>
</evidence>
<evidence type="ECO:0000269" key="3">
    <source>
    </source>
</evidence>
<evidence type="ECO:0000305" key="4"/>
<comment type="catalytic activity">
    <reaction>
        <text>Cyclizes part of a (1-&gt;4)-alpha-D-glucan chain by formation of a (1-&gt;4)-alpha-D-glucosidic bond.</text>
        <dbReference type="EC" id="2.4.1.19"/>
    </reaction>
</comment>
<comment type="cofactor">
    <cofactor evidence="1">
        <name>Ca(2+)</name>
        <dbReference type="ChEBI" id="CHEBI:29108"/>
    </cofactor>
    <text evidence="1">Binds 2 calcium ions per subunit.</text>
</comment>
<comment type="subunit">
    <text>Monomer.</text>
</comment>
<comment type="subcellular location">
    <subcellularLocation>
        <location evidence="1">Secreted</location>
    </subcellularLocation>
</comment>
<comment type="domain">
    <text>May consist of two protein domains: the one in the N-terminal side cleaves the alpha-1,4-glucosidic bond in starch, and the other in the C-terminal side catalyzes other activities, including the reconstitution of an alpha-1,4-glucosidic linkage for cyclizing the maltooligosaccharide produced.</text>
</comment>
<comment type="similarity">
    <text evidence="4">Belongs to the glycosyl hydrolase 13 family.</text>
</comment>
<feature type="signal peptide" evidence="3">
    <location>
        <begin position="1"/>
        <end position="27"/>
    </location>
</feature>
<feature type="chain" id="PRO_0000001440" description="Cyclomaltodextrin glucanotransferase">
    <location>
        <begin position="28"/>
        <end position="713"/>
    </location>
</feature>
<feature type="domain" description="IPT/TIG">
    <location>
        <begin position="526"/>
        <end position="607"/>
    </location>
</feature>
<feature type="domain" description="CBM20" evidence="2">
    <location>
        <begin position="608"/>
        <end position="713"/>
    </location>
</feature>
<feature type="region of interest" description="A1">
    <location>
        <begin position="28"/>
        <end position="165"/>
    </location>
</feature>
<feature type="region of interest" description="B">
    <location>
        <begin position="166"/>
        <end position="229"/>
    </location>
</feature>
<feature type="region of interest" description="A2">
    <location>
        <begin position="230"/>
        <end position="433"/>
    </location>
</feature>
<feature type="region of interest" description="C">
    <location>
        <begin position="434"/>
        <end position="522"/>
    </location>
</feature>
<feature type="region of interest" description="D">
    <location>
        <begin position="523"/>
        <end position="609"/>
    </location>
</feature>
<feature type="region of interest" description="E">
    <location>
        <begin position="610"/>
        <end position="713"/>
    </location>
</feature>
<feature type="active site" description="Nucleophile" evidence="1">
    <location>
        <position position="256"/>
    </location>
</feature>
<feature type="active site" description="Proton donor" evidence="1">
    <location>
        <position position="284"/>
    </location>
</feature>
<feature type="binding site" evidence="1">
    <location>
        <position position="54"/>
    </location>
    <ligand>
        <name>Ca(2+)</name>
        <dbReference type="ChEBI" id="CHEBI:29108"/>
        <label>1</label>
    </ligand>
</feature>
<feature type="binding site" evidence="1">
    <location>
        <position position="56"/>
    </location>
    <ligand>
        <name>Ca(2+)</name>
        <dbReference type="ChEBI" id="CHEBI:29108"/>
        <label>1</label>
    </ligand>
</feature>
<feature type="binding site" evidence="1">
    <location>
        <position position="59"/>
    </location>
    <ligand>
        <name>Ca(2+)</name>
        <dbReference type="ChEBI" id="CHEBI:29108"/>
        <label>1</label>
    </ligand>
</feature>
<feature type="binding site" evidence="1">
    <location>
        <position position="60"/>
    </location>
    <ligand>
        <name>Ca(2+)</name>
        <dbReference type="ChEBI" id="CHEBI:29108"/>
        <label>1</label>
    </ligand>
</feature>
<feature type="binding site" evidence="1">
    <location>
        <position position="78"/>
    </location>
    <ligand>
        <name>Ca(2+)</name>
        <dbReference type="ChEBI" id="CHEBI:29108"/>
        <label>1</label>
    </ligand>
</feature>
<feature type="binding site" evidence="1">
    <location>
        <position position="80"/>
    </location>
    <ligand>
        <name>Ca(2+)</name>
        <dbReference type="ChEBI" id="CHEBI:29108"/>
        <label>1</label>
    </ligand>
</feature>
<feature type="binding site" evidence="1">
    <location>
        <begin position="127"/>
        <end position="128"/>
    </location>
    <ligand>
        <name>substrate</name>
    </ligand>
</feature>
<feature type="binding site" evidence="1">
    <location>
        <position position="166"/>
    </location>
    <ligand>
        <name>Ca(2+)</name>
        <dbReference type="ChEBI" id="CHEBI:29108"/>
        <label>2</label>
    </ligand>
</feature>
<feature type="binding site" evidence="1">
    <location>
        <position position="167"/>
    </location>
    <ligand>
        <name>substrate</name>
    </ligand>
</feature>
<feature type="binding site" evidence="1">
    <location>
        <position position="217"/>
    </location>
    <ligand>
        <name>Ca(2+)</name>
        <dbReference type="ChEBI" id="CHEBI:29108"/>
        <label>2</label>
    </ligand>
</feature>
<feature type="binding site" evidence="1">
    <location>
        <begin position="220"/>
        <end position="223"/>
    </location>
    <ligand>
        <name>substrate</name>
    </ligand>
</feature>
<feature type="binding site" evidence="1">
    <location>
        <position position="226"/>
    </location>
    <ligand>
        <name>Ca(2+)</name>
        <dbReference type="ChEBI" id="CHEBI:29108"/>
        <label>2</label>
    </ligand>
</feature>
<feature type="binding site" evidence="1">
    <location>
        <position position="254"/>
    </location>
    <ligand>
        <name>substrate</name>
    </ligand>
</feature>
<feature type="binding site" evidence="1">
    <location>
        <begin position="259"/>
        <end position="260"/>
    </location>
    <ligand>
        <name>substrate</name>
    </ligand>
</feature>
<feature type="binding site" evidence="1">
    <location>
        <position position="260"/>
    </location>
    <ligand>
        <name>Ca(2+)</name>
        <dbReference type="ChEBI" id="CHEBI:29108"/>
        <label>2</label>
    </ligand>
</feature>
<feature type="binding site" evidence="1">
    <location>
        <position position="354"/>
    </location>
    <ligand>
        <name>substrate</name>
    </ligand>
</feature>
<feature type="binding site" evidence="1">
    <location>
        <position position="398"/>
    </location>
    <ligand>
        <name>substrate</name>
    </ligand>
</feature>
<feature type="binding site" evidence="1">
    <location>
        <position position="402"/>
    </location>
    <ligand>
        <name>substrate</name>
    </ligand>
</feature>
<feature type="site" description="Transition state stabilizer" evidence="1">
    <location>
        <position position="355"/>
    </location>
</feature>
<feature type="disulfide bond" evidence="1">
    <location>
        <begin position="70"/>
        <end position="77"/>
    </location>
</feature>
<reference key="1">
    <citation type="journal article" date="1989" name="J. Gen. Microbiol.">
        <title>Construction of a chimeric series of Bacillus cyclomaltodextrin glucanotransferases and analysis of the thermal stabilities and pH optima of the enzymes.</title>
        <authorList>
            <person name="Kaneko T."/>
            <person name="Song K.B."/>
            <person name="Hamamoto T."/>
            <person name="Kudo T."/>
            <person name="Horikoshi K."/>
        </authorList>
    </citation>
    <scope>NUCLEOTIDE SEQUENCE [GENOMIC DNA]</scope>
    <scope>PROTEIN SEQUENCE OF 28-44</scope>
</reference>
<proteinExistence type="evidence at protein level"/>
<sequence length="713" mass="77390">MKKISKLTTALALSLSLALSLLGPAHAAPDTSVSNKQNFSTDVIYQIFTDRFSDGNPANNPTGPAFDGTCTNLRLYCGGDWQGIINKINDGYLTGMGVTAIWISQPVENIYSVINYSGVNNTAYHGYWARDFKKTNPAYGTIADFQNLIAAAHAKNIKVIIDFAPNHTSPASLDQPSFAENGKLYNNGRDEGGYTNDTHNLFHHNGGTDFSTTENGIYKNLYDLADLNHNNSTVDTYLKDAIKMWLDLGIDGIRMDAVKHMPFGWQKSFMATVNNYKPVFTFGEWFLGVNEVSAENHKFANVSGMSLLDFRFAQKVRQVFKDNTDNMYGLKSMLEGSATDYAQMEDQVTFIDNHDMERFHNNSANRRKLEQALAFTLTSRGVPAIYYGTEQYMSGGNDPDNRARIPSFSTTTTAYQVSKKLAPLRKSNPAIAYGTTQERWINNDVLIYERKFGNNVAVIAVNRNVNTSASITGLVTSLPAGSYTDVLGGLLNGNNLTVGSGGSASIFTLAAGGTAVWQYTTAVTAPTIGHVGPMMAKPGAAVTIDGRGFGATKGTVYFGTTAVTGANITAWEDTQIKVKIPAVAGGVYNIKIANSAGTSSNVHDNFEVLSGDQVSVRFVVNNATTALGQNVYLAGSVSELGNWDPAKAIGPLYNQVIYQYPTWYYDVTVPAGKTIEFKFLKKQGSTVTWEGGSNHTFTAPTSGTATINVNWQP</sequence>
<name>CDGT_BAC11</name>
<keyword id="KW-0106">Calcium</keyword>
<keyword id="KW-0903">Direct protein sequencing</keyword>
<keyword id="KW-1015">Disulfide bond</keyword>
<keyword id="KW-0328">Glycosyltransferase</keyword>
<keyword id="KW-0479">Metal-binding</keyword>
<keyword id="KW-0964">Secreted</keyword>
<keyword id="KW-0732">Signal</keyword>
<keyword id="KW-0808">Transferase</keyword>
<protein>
    <recommendedName>
        <fullName>Cyclomaltodextrin glucanotransferase</fullName>
        <ecNumber>2.4.1.19</ecNumber>
    </recommendedName>
    <alternativeName>
        <fullName>Cyclodextrin-glycosyltransferase</fullName>
        <shortName>CGTase</shortName>
    </alternativeName>
</protein>
<dbReference type="EC" id="2.4.1.19"/>
<dbReference type="EMBL" id="M28053">
    <property type="protein sequence ID" value="AAA22310.1"/>
    <property type="molecule type" value="Genomic_DNA"/>
</dbReference>
<dbReference type="SMR" id="P30921"/>
<dbReference type="CAZy" id="CBM20">
    <property type="family name" value="Carbohydrate-Binding Module Family 20"/>
</dbReference>
<dbReference type="CAZy" id="GH13">
    <property type="family name" value="Glycoside Hydrolase Family 13"/>
</dbReference>
<dbReference type="BRENDA" id="2.4.1.19">
    <property type="organism ID" value="691"/>
</dbReference>
<dbReference type="GO" id="GO:0005576">
    <property type="term" value="C:extracellular region"/>
    <property type="evidence" value="ECO:0007669"/>
    <property type="project" value="UniProtKB-SubCell"/>
</dbReference>
<dbReference type="GO" id="GO:0004556">
    <property type="term" value="F:alpha-amylase activity"/>
    <property type="evidence" value="ECO:0007669"/>
    <property type="project" value="InterPro"/>
</dbReference>
<dbReference type="GO" id="GO:0043895">
    <property type="term" value="F:cyclomaltodextrin glucanotransferase activity"/>
    <property type="evidence" value="ECO:0007669"/>
    <property type="project" value="UniProtKB-EC"/>
</dbReference>
<dbReference type="GO" id="GO:0046872">
    <property type="term" value="F:metal ion binding"/>
    <property type="evidence" value="ECO:0007669"/>
    <property type="project" value="UniProtKB-KW"/>
</dbReference>
<dbReference type="GO" id="GO:2001070">
    <property type="term" value="F:starch binding"/>
    <property type="evidence" value="ECO:0007669"/>
    <property type="project" value="InterPro"/>
</dbReference>
<dbReference type="GO" id="GO:0005975">
    <property type="term" value="P:carbohydrate metabolic process"/>
    <property type="evidence" value="ECO:0007669"/>
    <property type="project" value="InterPro"/>
</dbReference>
<dbReference type="CDD" id="cd11320">
    <property type="entry name" value="AmyAc_AmyMalt_CGTase_like"/>
    <property type="match status" value="1"/>
</dbReference>
<dbReference type="CDD" id="cd05807">
    <property type="entry name" value="CBM20_CGTase"/>
    <property type="match status" value="1"/>
</dbReference>
<dbReference type="CDD" id="cd00604">
    <property type="entry name" value="IPT_CGTD"/>
    <property type="match status" value="1"/>
</dbReference>
<dbReference type="Gene3D" id="3.20.20.80">
    <property type="entry name" value="Glycosidases"/>
    <property type="match status" value="1"/>
</dbReference>
<dbReference type="Gene3D" id="2.60.40.1180">
    <property type="entry name" value="Golgi alpha-mannosidase II"/>
    <property type="match status" value="1"/>
</dbReference>
<dbReference type="Gene3D" id="2.60.40.10">
    <property type="entry name" value="Immunoglobulins"/>
    <property type="match status" value="2"/>
</dbReference>
<dbReference type="InterPro" id="IPR006048">
    <property type="entry name" value="A-amylase/branching_C"/>
</dbReference>
<dbReference type="InterPro" id="IPR031319">
    <property type="entry name" value="A-amylase_C"/>
</dbReference>
<dbReference type="InterPro" id="IPR006046">
    <property type="entry name" value="Alpha_amylase"/>
</dbReference>
<dbReference type="InterPro" id="IPR013784">
    <property type="entry name" value="Carb-bd-like_fold"/>
</dbReference>
<dbReference type="InterPro" id="IPR002044">
    <property type="entry name" value="CBM20"/>
</dbReference>
<dbReference type="InterPro" id="IPR006047">
    <property type="entry name" value="Glyco_hydro_13_cat_dom"/>
</dbReference>
<dbReference type="InterPro" id="IPR013780">
    <property type="entry name" value="Glyco_hydro_b"/>
</dbReference>
<dbReference type="InterPro" id="IPR017853">
    <property type="entry name" value="Glycoside_hydrolase_SF"/>
</dbReference>
<dbReference type="InterPro" id="IPR013783">
    <property type="entry name" value="Ig-like_fold"/>
</dbReference>
<dbReference type="InterPro" id="IPR014756">
    <property type="entry name" value="Ig_E-set"/>
</dbReference>
<dbReference type="InterPro" id="IPR002909">
    <property type="entry name" value="IPT_dom"/>
</dbReference>
<dbReference type="PANTHER" id="PTHR10357:SF215">
    <property type="entry name" value="ALPHA-AMYLASE 1"/>
    <property type="match status" value="1"/>
</dbReference>
<dbReference type="PANTHER" id="PTHR10357">
    <property type="entry name" value="ALPHA-AMYLASE FAMILY MEMBER"/>
    <property type="match status" value="1"/>
</dbReference>
<dbReference type="Pfam" id="PF00128">
    <property type="entry name" value="Alpha-amylase"/>
    <property type="match status" value="1"/>
</dbReference>
<dbReference type="Pfam" id="PF02806">
    <property type="entry name" value="Alpha-amylase_C"/>
    <property type="match status" value="1"/>
</dbReference>
<dbReference type="Pfam" id="PF00686">
    <property type="entry name" value="CBM_20"/>
    <property type="match status" value="1"/>
</dbReference>
<dbReference type="Pfam" id="PF01833">
    <property type="entry name" value="TIG"/>
    <property type="match status" value="1"/>
</dbReference>
<dbReference type="PRINTS" id="PR00110">
    <property type="entry name" value="ALPHAAMYLASE"/>
</dbReference>
<dbReference type="SMART" id="SM00642">
    <property type="entry name" value="Aamy"/>
    <property type="match status" value="1"/>
</dbReference>
<dbReference type="SMART" id="SM00632">
    <property type="entry name" value="Aamy_C"/>
    <property type="match status" value="1"/>
</dbReference>
<dbReference type="SMART" id="SM01065">
    <property type="entry name" value="CBM_2"/>
    <property type="match status" value="1"/>
</dbReference>
<dbReference type="SUPFAM" id="SSF51445">
    <property type="entry name" value="(Trans)glycosidases"/>
    <property type="match status" value="1"/>
</dbReference>
<dbReference type="SUPFAM" id="SSF81296">
    <property type="entry name" value="E set domains"/>
    <property type="match status" value="1"/>
</dbReference>
<dbReference type="SUPFAM" id="SSF51011">
    <property type="entry name" value="Glycosyl hydrolase domain"/>
    <property type="match status" value="1"/>
</dbReference>
<dbReference type="SUPFAM" id="SSF49452">
    <property type="entry name" value="Starch-binding domain-like"/>
    <property type="match status" value="1"/>
</dbReference>
<dbReference type="PROSITE" id="PS51166">
    <property type="entry name" value="CBM20"/>
    <property type="match status" value="1"/>
</dbReference>
<gene>
    <name type="primary">cgt</name>
</gene>
<organism>
    <name type="scientific">Bacillus sp. (strain 17-1)</name>
    <dbReference type="NCBI Taxonomy" id="72572"/>
    <lineage>
        <taxon>Bacteria</taxon>
        <taxon>Bacillati</taxon>
        <taxon>Bacillota</taxon>
        <taxon>Bacilli</taxon>
        <taxon>Bacillales</taxon>
        <taxon>Bacillaceae</taxon>
        <taxon>Bacillus</taxon>
    </lineage>
</organism>
<accession>P30921</accession>